<keyword id="KW-0030">Aminoacyl-tRNA synthetase</keyword>
<keyword id="KW-0067">ATP-binding</keyword>
<keyword id="KW-0963">Cytoplasm</keyword>
<keyword id="KW-0436">Ligase</keyword>
<keyword id="KW-0479">Metal-binding</keyword>
<keyword id="KW-0547">Nucleotide-binding</keyword>
<keyword id="KW-0648">Protein biosynthesis</keyword>
<keyword id="KW-0694">RNA-binding</keyword>
<keyword id="KW-0820">tRNA-binding</keyword>
<keyword id="KW-0862">Zinc</keyword>
<proteinExistence type="inferred from homology"/>
<comment type="function">
    <text evidence="1">Catalyzes the attachment of alanine to tRNA(Ala) in a two-step reaction: alanine is first activated by ATP to form Ala-AMP and then transferred to the acceptor end of tRNA(Ala). Also edits incorrectly charged Ser-tRNA(Ala) and Gly-tRNA(Ala) via its editing domain.</text>
</comment>
<comment type="catalytic activity">
    <reaction evidence="1">
        <text>tRNA(Ala) + L-alanine + ATP = L-alanyl-tRNA(Ala) + AMP + diphosphate</text>
        <dbReference type="Rhea" id="RHEA:12540"/>
        <dbReference type="Rhea" id="RHEA-COMP:9657"/>
        <dbReference type="Rhea" id="RHEA-COMP:9923"/>
        <dbReference type="ChEBI" id="CHEBI:30616"/>
        <dbReference type="ChEBI" id="CHEBI:33019"/>
        <dbReference type="ChEBI" id="CHEBI:57972"/>
        <dbReference type="ChEBI" id="CHEBI:78442"/>
        <dbReference type="ChEBI" id="CHEBI:78497"/>
        <dbReference type="ChEBI" id="CHEBI:456215"/>
        <dbReference type="EC" id="6.1.1.7"/>
    </reaction>
</comment>
<comment type="cofactor">
    <cofactor evidence="1">
        <name>Zn(2+)</name>
        <dbReference type="ChEBI" id="CHEBI:29105"/>
    </cofactor>
    <text evidence="1">Binds 1 zinc ion per subunit.</text>
</comment>
<comment type="subcellular location">
    <subcellularLocation>
        <location evidence="1">Cytoplasm</location>
    </subcellularLocation>
</comment>
<comment type="domain">
    <text evidence="1">Consists of three domains; the N-terminal catalytic domain, the editing domain and the C-terminal C-Ala domain. The editing domain removes incorrectly charged amino acids, while the C-Ala domain, along with tRNA(Ala), serves as a bridge to cooperatively bring together the editing and aminoacylation centers thus stimulating deacylation of misacylated tRNAs.</text>
</comment>
<comment type="similarity">
    <text evidence="1">Belongs to the class-II aminoacyl-tRNA synthetase family.</text>
</comment>
<gene>
    <name evidence="1" type="primary">alaS</name>
    <name type="ordered locus">MmarC6_0513</name>
</gene>
<dbReference type="EC" id="6.1.1.7" evidence="1"/>
<dbReference type="EMBL" id="CP000867">
    <property type="protein sequence ID" value="ABX01330.1"/>
    <property type="molecule type" value="Genomic_DNA"/>
</dbReference>
<dbReference type="SMR" id="A9A6Q2"/>
<dbReference type="STRING" id="444158.MmarC6_0513"/>
<dbReference type="KEGG" id="mmx:MmarC6_0513"/>
<dbReference type="eggNOG" id="arCOG01255">
    <property type="taxonomic scope" value="Archaea"/>
</dbReference>
<dbReference type="HOGENOM" id="CLU_004485_4_0_2"/>
<dbReference type="OrthoDB" id="7506at2157"/>
<dbReference type="PhylomeDB" id="A9A6Q2"/>
<dbReference type="GO" id="GO:0005737">
    <property type="term" value="C:cytoplasm"/>
    <property type="evidence" value="ECO:0007669"/>
    <property type="project" value="UniProtKB-SubCell"/>
</dbReference>
<dbReference type="GO" id="GO:0004813">
    <property type="term" value="F:alanine-tRNA ligase activity"/>
    <property type="evidence" value="ECO:0007669"/>
    <property type="project" value="UniProtKB-UniRule"/>
</dbReference>
<dbReference type="GO" id="GO:0002161">
    <property type="term" value="F:aminoacyl-tRNA deacylase activity"/>
    <property type="evidence" value="ECO:0007669"/>
    <property type="project" value="TreeGrafter"/>
</dbReference>
<dbReference type="GO" id="GO:0005524">
    <property type="term" value="F:ATP binding"/>
    <property type="evidence" value="ECO:0007669"/>
    <property type="project" value="UniProtKB-UniRule"/>
</dbReference>
<dbReference type="GO" id="GO:0000049">
    <property type="term" value="F:tRNA binding"/>
    <property type="evidence" value="ECO:0007669"/>
    <property type="project" value="UniProtKB-KW"/>
</dbReference>
<dbReference type="GO" id="GO:0008270">
    <property type="term" value="F:zinc ion binding"/>
    <property type="evidence" value="ECO:0007669"/>
    <property type="project" value="UniProtKB-UniRule"/>
</dbReference>
<dbReference type="GO" id="GO:0006419">
    <property type="term" value="P:alanyl-tRNA aminoacylation"/>
    <property type="evidence" value="ECO:0007669"/>
    <property type="project" value="UniProtKB-UniRule"/>
</dbReference>
<dbReference type="CDD" id="cd00673">
    <property type="entry name" value="AlaRS_core"/>
    <property type="match status" value="1"/>
</dbReference>
<dbReference type="FunFam" id="3.30.54.20:FF:000005">
    <property type="entry name" value="Alanine--tRNA ligase"/>
    <property type="match status" value="1"/>
</dbReference>
<dbReference type="FunFam" id="3.30.930.10:FF:000056">
    <property type="entry name" value="Alanine--tRNA ligase"/>
    <property type="match status" value="1"/>
</dbReference>
<dbReference type="FunFam" id="3.30.980.10:FF:000004">
    <property type="entry name" value="Alanine--tRNA ligase, cytoplasmic"/>
    <property type="match status" value="1"/>
</dbReference>
<dbReference type="Gene3D" id="2.40.30.130">
    <property type="match status" value="1"/>
</dbReference>
<dbReference type="Gene3D" id="3.10.310.40">
    <property type="match status" value="1"/>
</dbReference>
<dbReference type="Gene3D" id="3.30.54.20">
    <property type="match status" value="1"/>
</dbReference>
<dbReference type="Gene3D" id="6.10.250.550">
    <property type="match status" value="1"/>
</dbReference>
<dbReference type="Gene3D" id="3.30.930.10">
    <property type="entry name" value="Bira Bifunctional Protein, Domain 2"/>
    <property type="match status" value="1"/>
</dbReference>
<dbReference type="Gene3D" id="3.30.980.10">
    <property type="entry name" value="Threonyl-trna Synthetase, Chain A, domain 2"/>
    <property type="match status" value="1"/>
</dbReference>
<dbReference type="HAMAP" id="MF_00036_A">
    <property type="entry name" value="Ala_tRNA_synth_A"/>
    <property type="match status" value="1"/>
</dbReference>
<dbReference type="InterPro" id="IPR045864">
    <property type="entry name" value="aa-tRNA-synth_II/BPL/LPL"/>
</dbReference>
<dbReference type="InterPro" id="IPR002318">
    <property type="entry name" value="Ala-tRNA-lgiase_IIc"/>
</dbReference>
<dbReference type="InterPro" id="IPR018162">
    <property type="entry name" value="Ala-tRNA-ligase_IIc_anticod-bd"/>
</dbReference>
<dbReference type="InterPro" id="IPR018165">
    <property type="entry name" value="Ala-tRNA-synth_IIc_core"/>
</dbReference>
<dbReference type="InterPro" id="IPR018164">
    <property type="entry name" value="Ala-tRNA-synth_IIc_N"/>
</dbReference>
<dbReference type="InterPro" id="IPR022429">
    <property type="entry name" value="Ala-tRNA_lgiase_arc"/>
</dbReference>
<dbReference type="InterPro" id="IPR050058">
    <property type="entry name" value="Ala-tRNA_ligase"/>
</dbReference>
<dbReference type="InterPro" id="IPR018163">
    <property type="entry name" value="Thr/Ala-tRNA-synth_IIc_edit"/>
</dbReference>
<dbReference type="InterPro" id="IPR009000">
    <property type="entry name" value="Transl_B-barrel_sf"/>
</dbReference>
<dbReference type="InterPro" id="IPR012947">
    <property type="entry name" value="tRNA_SAD"/>
</dbReference>
<dbReference type="NCBIfam" id="TIGR03683">
    <property type="entry name" value="A-tRNA_syn_arch"/>
    <property type="match status" value="1"/>
</dbReference>
<dbReference type="NCBIfam" id="TIGR00344">
    <property type="entry name" value="alaS"/>
    <property type="match status" value="1"/>
</dbReference>
<dbReference type="PANTHER" id="PTHR11777:SF9">
    <property type="entry name" value="ALANINE--TRNA LIGASE, CYTOPLASMIC"/>
    <property type="match status" value="1"/>
</dbReference>
<dbReference type="PANTHER" id="PTHR11777">
    <property type="entry name" value="ALANYL-TRNA SYNTHETASE"/>
    <property type="match status" value="1"/>
</dbReference>
<dbReference type="Pfam" id="PF01411">
    <property type="entry name" value="tRNA-synt_2c"/>
    <property type="match status" value="1"/>
</dbReference>
<dbReference type="Pfam" id="PF07973">
    <property type="entry name" value="tRNA_SAD"/>
    <property type="match status" value="1"/>
</dbReference>
<dbReference type="PRINTS" id="PR00980">
    <property type="entry name" value="TRNASYNTHALA"/>
</dbReference>
<dbReference type="SMART" id="SM00863">
    <property type="entry name" value="tRNA_SAD"/>
    <property type="match status" value="1"/>
</dbReference>
<dbReference type="SUPFAM" id="SSF55681">
    <property type="entry name" value="Class II aaRS and biotin synthetases"/>
    <property type="match status" value="1"/>
</dbReference>
<dbReference type="SUPFAM" id="SSF101353">
    <property type="entry name" value="Putative anticodon-binding domain of alanyl-tRNA synthetase (AlaRS)"/>
    <property type="match status" value="1"/>
</dbReference>
<dbReference type="SUPFAM" id="SSF55186">
    <property type="entry name" value="ThrRS/AlaRS common domain"/>
    <property type="match status" value="1"/>
</dbReference>
<dbReference type="SUPFAM" id="SSF50447">
    <property type="entry name" value="Translation proteins"/>
    <property type="match status" value="1"/>
</dbReference>
<dbReference type="PROSITE" id="PS50860">
    <property type="entry name" value="AA_TRNA_LIGASE_II_ALA"/>
    <property type="match status" value="1"/>
</dbReference>
<evidence type="ECO:0000255" key="1">
    <source>
        <dbReference type="HAMAP-Rule" id="MF_00036"/>
    </source>
</evidence>
<accession>A9A6Q2</accession>
<name>SYA_METM6</name>
<feature type="chain" id="PRO_0000347886" description="Alanine--tRNA ligase">
    <location>
        <begin position="1"/>
        <end position="892"/>
    </location>
</feature>
<feature type="binding site" evidence="1">
    <location>
        <position position="596"/>
    </location>
    <ligand>
        <name>Zn(2+)</name>
        <dbReference type="ChEBI" id="CHEBI:29105"/>
    </ligand>
</feature>
<feature type="binding site" evidence="1">
    <location>
        <position position="600"/>
    </location>
    <ligand>
        <name>Zn(2+)</name>
        <dbReference type="ChEBI" id="CHEBI:29105"/>
    </ligand>
</feature>
<feature type="binding site" evidence="1">
    <location>
        <position position="700"/>
    </location>
    <ligand>
        <name>Zn(2+)</name>
        <dbReference type="ChEBI" id="CHEBI:29105"/>
    </ligand>
</feature>
<feature type="binding site" evidence="1">
    <location>
        <position position="704"/>
    </location>
    <ligand>
        <name>Zn(2+)</name>
        <dbReference type="ChEBI" id="CHEBI:29105"/>
    </ligand>
</feature>
<sequence length="892" mass="101482">MEINHDYRVKLFDELSFERKQCTECNQWFWTLDKDRTTCGDSPCDEYSFIGSPITSKKYTYNEMVKEFTNFFAEKGHSPVKRSPVVAKRWRDDILLTIASIAVFQPWVTNGLVKPVKNPLVIAQPCIRLNDIDNVGRTGRHLTCFTMGAHHAFNSKDEYKYWTDKTVEYCFELMQRLGIDGKTITFIESWWEGGGNAGPCYEVITHGVELATLVFMQYKKVGNDYEEIPLKIVDTGYGIERFAWASQGTPTVYESLFSEIIEKLKEDAGIPEVDEKIMAESATLAGLMDIENVGDLRVLRQKVAEKIGMDVDELDKLISPLEYIYAIADHTRCLSFMFGDGIVPSNVKEGYLARLVLRKTLRYMEKIGISMSIKDIIAMQLENMKEIYPELSEMKEYVMDVLDAEEKKYIQTVNRGRGIVERMAASKSEITLDDLIELYDSNGLPPEIVKDVVDELNKKGKKTIAITVPDNFYTIVAERHEEEKPEEVVSTKKELPELEVSETELLFFKHPTQAEFEAKILKIAEKYVVLDKTLFYAEGGGQKYDIGQLNDIEVSDVQKKNGIVFHKVSDISKFKEGDTVKGTLNWENRLKLMRNHTATHVINAAATRVLGKHIWQTGSNVDTEKGRLDITHYERISREQVKEIERIANEMVLSKMPVNSTFMDRNDAEQKYGFTIYQGGVVPGDTLRIIEIEETDVEACGGTHCSNTSEVGYIKVLKTERIQDGVERLEYSTGMGSVSEIAIIEDTLIDSAEILGIPNDQLPKTVKRFFEEWKEQKKTIEELQKKVGELVKYELADKFEKVGDYEVLVEQVSGTPNELMSIADNLAVGNKLIVLMNESDYLLCKRGENVELSMKELIRNIGKGGGKDNLAQGKYSETKEQITEKISQILNK</sequence>
<organism>
    <name type="scientific">Methanococcus maripaludis (strain C6 / ATCC BAA-1332)</name>
    <dbReference type="NCBI Taxonomy" id="444158"/>
    <lineage>
        <taxon>Archaea</taxon>
        <taxon>Methanobacteriati</taxon>
        <taxon>Methanobacteriota</taxon>
        <taxon>Methanomada group</taxon>
        <taxon>Methanococci</taxon>
        <taxon>Methanococcales</taxon>
        <taxon>Methanococcaceae</taxon>
        <taxon>Methanococcus</taxon>
    </lineage>
</organism>
<protein>
    <recommendedName>
        <fullName evidence="1">Alanine--tRNA ligase</fullName>
        <ecNumber evidence="1">6.1.1.7</ecNumber>
    </recommendedName>
    <alternativeName>
        <fullName evidence="1">Alanyl-tRNA synthetase</fullName>
        <shortName evidence="1">AlaRS</shortName>
    </alternativeName>
</protein>
<reference key="1">
    <citation type="submission" date="2007-10" db="EMBL/GenBank/DDBJ databases">
        <title>Complete sequence of Methanococcus maripaludis C6.</title>
        <authorList>
            <consortium name="US DOE Joint Genome Institute"/>
            <person name="Copeland A."/>
            <person name="Lucas S."/>
            <person name="Lapidus A."/>
            <person name="Barry K."/>
            <person name="Glavina del Rio T."/>
            <person name="Dalin E."/>
            <person name="Tice H."/>
            <person name="Pitluck S."/>
            <person name="Clum A."/>
            <person name="Schmutz J."/>
            <person name="Larimer F."/>
            <person name="Land M."/>
            <person name="Hauser L."/>
            <person name="Kyrpides N."/>
            <person name="Mikhailova N."/>
            <person name="Sieprawska-Lupa M."/>
            <person name="Whitman W.B."/>
            <person name="Richardson P."/>
        </authorList>
    </citation>
    <scope>NUCLEOTIDE SEQUENCE [LARGE SCALE GENOMIC DNA]</scope>
    <source>
        <strain>C6 / ATCC BAA-1332</strain>
    </source>
</reference>